<sequence length="62" mass="6912">MAKVCYFTGRKTVSGNNRSHAMNKTKRVVKPNLQKVTVLIDGKPKKVWASARALKSGKVERV</sequence>
<reference key="1">
    <citation type="journal article" date="2006" name="Proc. Natl. Acad. Sci. U.S.A.">
        <title>Comparative genomics of the lactic acid bacteria.</title>
        <authorList>
            <person name="Makarova K.S."/>
            <person name="Slesarev A."/>
            <person name="Wolf Y.I."/>
            <person name="Sorokin A."/>
            <person name="Mirkin B."/>
            <person name="Koonin E.V."/>
            <person name="Pavlov A."/>
            <person name="Pavlova N."/>
            <person name="Karamychev V."/>
            <person name="Polouchine N."/>
            <person name="Shakhova V."/>
            <person name="Grigoriev I."/>
            <person name="Lou Y."/>
            <person name="Rohksar D."/>
            <person name="Lucas S."/>
            <person name="Huang K."/>
            <person name="Goodstein D.M."/>
            <person name="Hawkins T."/>
            <person name="Plengvidhya V."/>
            <person name="Welker D."/>
            <person name="Hughes J."/>
            <person name="Goh Y."/>
            <person name="Benson A."/>
            <person name="Baldwin K."/>
            <person name="Lee J.-H."/>
            <person name="Diaz-Muniz I."/>
            <person name="Dosti B."/>
            <person name="Smeianov V."/>
            <person name="Wechter W."/>
            <person name="Barabote R."/>
            <person name="Lorca G."/>
            <person name="Altermann E."/>
            <person name="Barrangou R."/>
            <person name="Ganesan B."/>
            <person name="Xie Y."/>
            <person name="Rawsthorne H."/>
            <person name="Tamir D."/>
            <person name="Parker C."/>
            <person name="Breidt F."/>
            <person name="Broadbent J.R."/>
            <person name="Hutkins R."/>
            <person name="O'Sullivan D."/>
            <person name="Steele J."/>
            <person name="Unlu G."/>
            <person name="Saier M.H. Jr."/>
            <person name="Klaenhammer T."/>
            <person name="Richardson P."/>
            <person name="Kozyavkin S."/>
            <person name="Weimer B.C."/>
            <person name="Mills D.A."/>
        </authorList>
    </citation>
    <scope>NUCLEOTIDE SEQUENCE [LARGE SCALE GENOMIC DNA]</scope>
    <source>
        <strain>ATCC BAA-491 / LMD-9</strain>
    </source>
</reference>
<name>RL28_STRTD</name>
<feature type="chain" id="PRO_1000007379" description="Large ribosomal subunit protein bL28">
    <location>
        <begin position="1"/>
        <end position="62"/>
    </location>
</feature>
<organism>
    <name type="scientific">Streptococcus thermophilus (strain ATCC BAA-491 / LMD-9)</name>
    <dbReference type="NCBI Taxonomy" id="322159"/>
    <lineage>
        <taxon>Bacteria</taxon>
        <taxon>Bacillati</taxon>
        <taxon>Bacillota</taxon>
        <taxon>Bacilli</taxon>
        <taxon>Lactobacillales</taxon>
        <taxon>Streptococcaceae</taxon>
        <taxon>Streptococcus</taxon>
    </lineage>
</organism>
<comment type="similarity">
    <text evidence="1">Belongs to the bacterial ribosomal protein bL28 family.</text>
</comment>
<evidence type="ECO:0000255" key="1">
    <source>
        <dbReference type="HAMAP-Rule" id="MF_00373"/>
    </source>
</evidence>
<evidence type="ECO:0000305" key="2"/>
<keyword id="KW-0687">Ribonucleoprotein</keyword>
<keyword id="KW-0689">Ribosomal protein</keyword>
<proteinExistence type="inferred from homology"/>
<accession>Q03IC6</accession>
<gene>
    <name evidence="1" type="primary">rpmB</name>
    <name type="ordered locus">STER_1936</name>
</gene>
<protein>
    <recommendedName>
        <fullName evidence="1">Large ribosomal subunit protein bL28</fullName>
    </recommendedName>
    <alternativeName>
        <fullName evidence="2">50S ribosomal protein L28</fullName>
    </alternativeName>
</protein>
<dbReference type="EMBL" id="CP000419">
    <property type="protein sequence ID" value="ABJ67046.1"/>
    <property type="molecule type" value="Genomic_DNA"/>
</dbReference>
<dbReference type="RefSeq" id="WP_002952184.1">
    <property type="nucleotide sequence ID" value="NC_008532.1"/>
</dbReference>
<dbReference type="SMR" id="Q03IC6"/>
<dbReference type="GeneID" id="66899685"/>
<dbReference type="KEGG" id="ste:STER_1936"/>
<dbReference type="HOGENOM" id="CLU_064548_7_1_9"/>
<dbReference type="GO" id="GO:1990904">
    <property type="term" value="C:ribonucleoprotein complex"/>
    <property type="evidence" value="ECO:0007669"/>
    <property type="project" value="UniProtKB-KW"/>
</dbReference>
<dbReference type="GO" id="GO:0005840">
    <property type="term" value="C:ribosome"/>
    <property type="evidence" value="ECO:0007669"/>
    <property type="project" value="UniProtKB-KW"/>
</dbReference>
<dbReference type="GO" id="GO:0003735">
    <property type="term" value="F:structural constituent of ribosome"/>
    <property type="evidence" value="ECO:0007669"/>
    <property type="project" value="InterPro"/>
</dbReference>
<dbReference type="GO" id="GO:0006412">
    <property type="term" value="P:translation"/>
    <property type="evidence" value="ECO:0007669"/>
    <property type="project" value="UniProtKB-UniRule"/>
</dbReference>
<dbReference type="Gene3D" id="2.30.170.40">
    <property type="entry name" value="Ribosomal protein L28/L24"/>
    <property type="match status" value="1"/>
</dbReference>
<dbReference type="HAMAP" id="MF_00373">
    <property type="entry name" value="Ribosomal_bL28"/>
    <property type="match status" value="1"/>
</dbReference>
<dbReference type="InterPro" id="IPR050096">
    <property type="entry name" value="Bacterial_rp_bL28"/>
</dbReference>
<dbReference type="InterPro" id="IPR026569">
    <property type="entry name" value="Ribosomal_bL28"/>
</dbReference>
<dbReference type="InterPro" id="IPR034704">
    <property type="entry name" value="Ribosomal_bL28/bL31-like_sf"/>
</dbReference>
<dbReference type="InterPro" id="IPR001383">
    <property type="entry name" value="Ribosomal_bL28_bact-type"/>
</dbReference>
<dbReference type="InterPro" id="IPR037147">
    <property type="entry name" value="Ribosomal_bL28_sf"/>
</dbReference>
<dbReference type="NCBIfam" id="TIGR00009">
    <property type="entry name" value="L28"/>
    <property type="match status" value="1"/>
</dbReference>
<dbReference type="PANTHER" id="PTHR39080">
    <property type="entry name" value="50S RIBOSOMAL PROTEIN L28"/>
    <property type="match status" value="1"/>
</dbReference>
<dbReference type="PANTHER" id="PTHR39080:SF1">
    <property type="entry name" value="LARGE RIBOSOMAL SUBUNIT PROTEIN BL28A"/>
    <property type="match status" value="1"/>
</dbReference>
<dbReference type="Pfam" id="PF00830">
    <property type="entry name" value="Ribosomal_L28"/>
    <property type="match status" value="1"/>
</dbReference>
<dbReference type="SUPFAM" id="SSF143800">
    <property type="entry name" value="L28p-like"/>
    <property type="match status" value="1"/>
</dbReference>